<keyword id="KW-0963">Cytoplasm</keyword>
<keyword id="KW-0342">GTP-binding</keyword>
<keyword id="KW-0436">Ligase</keyword>
<keyword id="KW-0460">Magnesium</keyword>
<keyword id="KW-0479">Metal-binding</keyword>
<keyword id="KW-0547">Nucleotide-binding</keyword>
<keyword id="KW-0658">Purine biosynthesis</keyword>
<reference key="1">
    <citation type="journal article" date="2005" name="Science">
        <title>The genome of the basidiomycetous yeast and human pathogen Cryptococcus neoformans.</title>
        <authorList>
            <person name="Loftus B.J."/>
            <person name="Fung E."/>
            <person name="Roncaglia P."/>
            <person name="Rowley D."/>
            <person name="Amedeo P."/>
            <person name="Bruno D."/>
            <person name="Vamathevan J."/>
            <person name="Miranda M."/>
            <person name="Anderson I.J."/>
            <person name="Fraser J.A."/>
            <person name="Allen J.E."/>
            <person name="Bosdet I.E."/>
            <person name="Brent M.R."/>
            <person name="Chiu R."/>
            <person name="Doering T.L."/>
            <person name="Donlin M.J."/>
            <person name="D'Souza C.A."/>
            <person name="Fox D.S."/>
            <person name="Grinberg V."/>
            <person name="Fu J."/>
            <person name="Fukushima M."/>
            <person name="Haas B.J."/>
            <person name="Huang J.C."/>
            <person name="Janbon G."/>
            <person name="Jones S.J.M."/>
            <person name="Koo H.L."/>
            <person name="Krzywinski M.I."/>
            <person name="Kwon-Chung K.J."/>
            <person name="Lengeler K.B."/>
            <person name="Maiti R."/>
            <person name="Marra M.A."/>
            <person name="Marra R.E."/>
            <person name="Mathewson C.A."/>
            <person name="Mitchell T.G."/>
            <person name="Pertea M."/>
            <person name="Riggs F.R."/>
            <person name="Salzberg S.L."/>
            <person name="Schein J.E."/>
            <person name="Shvartsbeyn A."/>
            <person name="Shin H."/>
            <person name="Shumway M."/>
            <person name="Specht C.A."/>
            <person name="Suh B.B."/>
            <person name="Tenney A."/>
            <person name="Utterback T.R."/>
            <person name="Wickes B.L."/>
            <person name="Wortman J.R."/>
            <person name="Wye N.H."/>
            <person name="Kronstad J.W."/>
            <person name="Lodge J.K."/>
            <person name="Heitman J."/>
            <person name="Davis R.W."/>
            <person name="Fraser C.M."/>
            <person name="Hyman R.W."/>
        </authorList>
    </citation>
    <scope>NUCLEOTIDE SEQUENCE [LARGE SCALE GENOMIC DNA]</scope>
    <source>
        <strain>B-3501A</strain>
    </source>
</reference>
<protein>
    <recommendedName>
        <fullName evidence="2">Adenylosuccinate synthetase</fullName>
        <shortName evidence="2">AMPSase</shortName>
        <shortName evidence="2">AdSS</shortName>
        <ecNumber evidence="2">6.3.4.4</ecNumber>
    </recommendedName>
    <alternativeName>
        <fullName evidence="2">IMP--aspartate ligase</fullName>
    </alternativeName>
</protein>
<feature type="chain" id="PRO_0000410227" description="Adenylosuccinate synthetase">
    <location>
        <begin position="1"/>
        <end position="430"/>
    </location>
</feature>
<feature type="active site" description="Proton acceptor" evidence="2">
    <location>
        <position position="18"/>
    </location>
</feature>
<feature type="active site" description="Proton donor" evidence="2">
    <location>
        <position position="46"/>
    </location>
</feature>
<feature type="binding site" evidence="2">
    <location>
        <begin position="17"/>
        <end position="23"/>
    </location>
    <ligand>
        <name>GTP</name>
        <dbReference type="ChEBI" id="CHEBI:37565"/>
    </ligand>
</feature>
<feature type="binding site" description="in other chain" evidence="2">
    <location>
        <begin position="18"/>
        <end position="21"/>
    </location>
    <ligand>
        <name>IMP</name>
        <dbReference type="ChEBI" id="CHEBI:58053"/>
        <note>ligand shared between dimeric partners</note>
    </ligand>
</feature>
<feature type="binding site" evidence="2">
    <location>
        <position position="18"/>
    </location>
    <ligand>
        <name>Mg(2+)</name>
        <dbReference type="ChEBI" id="CHEBI:18420"/>
    </ligand>
</feature>
<feature type="binding site" description="in other chain" evidence="2">
    <location>
        <begin position="43"/>
        <end position="46"/>
    </location>
    <ligand>
        <name>IMP</name>
        <dbReference type="ChEBI" id="CHEBI:58053"/>
        <note>ligand shared between dimeric partners</note>
    </ligand>
</feature>
<feature type="binding site" evidence="2">
    <location>
        <begin position="45"/>
        <end position="47"/>
    </location>
    <ligand>
        <name>GTP</name>
        <dbReference type="ChEBI" id="CHEBI:37565"/>
    </ligand>
</feature>
<feature type="binding site" evidence="2">
    <location>
        <position position="45"/>
    </location>
    <ligand>
        <name>Mg(2+)</name>
        <dbReference type="ChEBI" id="CHEBI:18420"/>
    </ligand>
</feature>
<feature type="binding site" description="in other chain" evidence="2">
    <location>
        <position position="139"/>
    </location>
    <ligand>
        <name>IMP</name>
        <dbReference type="ChEBI" id="CHEBI:58053"/>
        <note>ligand shared between dimeric partners</note>
    </ligand>
</feature>
<feature type="binding site" evidence="2">
    <location>
        <position position="153"/>
    </location>
    <ligand>
        <name>IMP</name>
        <dbReference type="ChEBI" id="CHEBI:58053"/>
        <note>ligand shared between dimeric partners</note>
    </ligand>
</feature>
<feature type="binding site" description="in other chain" evidence="2">
    <location>
        <position position="229"/>
    </location>
    <ligand>
        <name>IMP</name>
        <dbReference type="ChEBI" id="CHEBI:58053"/>
        <note>ligand shared between dimeric partners</note>
    </ligand>
</feature>
<feature type="binding site" description="in other chain" evidence="2">
    <location>
        <position position="244"/>
    </location>
    <ligand>
        <name>IMP</name>
        <dbReference type="ChEBI" id="CHEBI:58053"/>
        <note>ligand shared between dimeric partners</note>
    </ligand>
</feature>
<feature type="binding site" evidence="2">
    <location>
        <begin position="304"/>
        <end position="310"/>
    </location>
    <ligand>
        <name>substrate</name>
    </ligand>
</feature>
<feature type="binding site" description="in other chain" evidence="2">
    <location>
        <position position="308"/>
    </location>
    <ligand>
        <name>IMP</name>
        <dbReference type="ChEBI" id="CHEBI:58053"/>
        <note>ligand shared between dimeric partners</note>
    </ligand>
</feature>
<feature type="binding site" evidence="2">
    <location>
        <position position="310"/>
    </location>
    <ligand>
        <name>GTP</name>
        <dbReference type="ChEBI" id="CHEBI:37565"/>
    </ligand>
</feature>
<feature type="binding site" evidence="2">
    <location>
        <begin position="336"/>
        <end position="338"/>
    </location>
    <ligand>
        <name>GTP</name>
        <dbReference type="ChEBI" id="CHEBI:37565"/>
    </ligand>
</feature>
<feature type="binding site" evidence="2">
    <location>
        <begin position="418"/>
        <end position="420"/>
    </location>
    <ligand>
        <name>GTP</name>
        <dbReference type="ChEBI" id="CHEBI:37565"/>
    </ligand>
</feature>
<proteinExistence type="inferred from homology"/>
<name>PURA_CRYNB</name>
<sequence>MAPSPEGVTVVLGAQWGDEGKGKLVDILAAEADICARCAGGNNAGHTIVVRNDKGEKTSYAFNLLPSGLINPECTAFIGSGVVVHVPSLFNELDTLERKGLKVAGRLFVSDRAHLVMGFHQIVDGLKEVELGGSSIGTTRKGIGPAYSSKASRSGLRVHHLFDPTFPAKFRKLVEGRFKRYGHFEFDTEGEIEMYLAFAERLRPFIVDGPTFMHNAVNSGKRVLVEGANALMLDLDYGTYPFVTSSSTSIGGVVSGLGISPFAIKRVVGVIKAYTTRVGGGPFPTEDLATVGETLQEVGAEYGTVTGRRRRCGWLDLVVMKYSTMINGYTSLNLTKLDVLDGFDEIKVATGYKIDGVEVEGFPADLDRLAKVEVQYATLPGWKTDISNCKTYQEFPENAKAYIKFIEDYLGVKVQYVGVGPGRDQNVIIF</sequence>
<evidence type="ECO:0000250" key="1"/>
<evidence type="ECO:0000255" key="2">
    <source>
        <dbReference type="HAMAP-Rule" id="MF_03125"/>
    </source>
</evidence>
<dbReference type="EC" id="6.3.4.4" evidence="2"/>
<dbReference type="EMBL" id="AAEY01000013">
    <property type="protein sequence ID" value="EAL22104.1"/>
    <property type="molecule type" value="Genomic_DNA"/>
</dbReference>
<dbReference type="RefSeq" id="XP_776751.1">
    <property type="nucleotide sequence ID" value="XM_771658.1"/>
</dbReference>
<dbReference type="SMR" id="P0CQ35"/>
<dbReference type="GeneID" id="4934907"/>
<dbReference type="KEGG" id="cnb:CNBC2420"/>
<dbReference type="VEuPathDB" id="FungiDB:CNBC2420"/>
<dbReference type="HOGENOM" id="CLU_029848_0_0_1"/>
<dbReference type="OrthoDB" id="1414at5206"/>
<dbReference type="UniPathway" id="UPA00075">
    <property type="reaction ID" value="UER00335"/>
</dbReference>
<dbReference type="GO" id="GO:0005737">
    <property type="term" value="C:cytoplasm"/>
    <property type="evidence" value="ECO:0007669"/>
    <property type="project" value="UniProtKB-SubCell"/>
</dbReference>
<dbReference type="GO" id="GO:0004019">
    <property type="term" value="F:adenylosuccinate synthase activity"/>
    <property type="evidence" value="ECO:0007669"/>
    <property type="project" value="UniProtKB-UniRule"/>
</dbReference>
<dbReference type="GO" id="GO:0016208">
    <property type="term" value="F:AMP binding"/>
    <property type="evidence" value="ECO:0007669"/>
    <property type="project" value="EnsemblFungi"/>
</dbReference>
<dbReference type="GO" id="GO:0003688">
    <property type="term" value="F:DNA replication origin binding"/>
    <property type="evidence" value="ECO:0007669"/>
    <property type="project" value="EnsemblFungi"/>
</dbReference>
<dbReference type="GO" id="GO:0019002">
    <property type="term" value="F:GMP binding"/>
    <property type="evidence" value="ECO:0007669"/>
    <property type="project" value="EnsemblFungi"/>
</dbReference>
<dbReference type="GO" id="GO:0005525">
    <property type="term" value="F:GTP binding"/>
    <property type="evidence" value="ECO:0007669"/>
    <property type="project" value="UniProtKB-UniRule"/>
</dbReference>
<dbReference type="GO" id="GO:0000287">
    <property type="term" value="F:magnesium ion binding"/>
    <property type="evidence" value="ECO:0007669"/>
    <property type="project" value="UniProtKB-UniRule"/>
</dbReference>
<dbReference type="GO" id="GO:0044208">
    <property type="term" value="P:'de novo' AMP biosynthetic process"/>
    <property type="evidence" value="ECO:0007669"/>
    <property type="project" value="UniProtKB-UniRule"/>
</dbReference>
<dbReference type="GO" id="GO:0071276">
    <property type="term" value="P:cellular response to cadmium ion"/>
    <property type="evidence" value="ECO:0007669"/>
    <property type="project" value="EnsemblFungi"/>
</dbReference>
<dbReference type="GO" id="GO:0046040">
    <property type="term" value="P:IMP metabolic process"/>
    <property type="evidence" value="ECO:0007669"/>
    <property type="project" value="TreeGrafter"/>
</dbReference>
<dbReference type="CDD" id="cd03108">
    <property type="entry name" value="AdSS"/>
    <property type="match status" value="1"/>
</dbReference>
<dbReference type="FunFam" id="3.90.170.10:FF:000001">
    <property type="entry name" value="Adenylosuccinate synthetase"/>
    <property type="match status" value="1"/>
</dbReference>
<dbReference type="FunFam" id="1.10.300.10:FF:000002">
    <property type="entry name" value="Adenylosuccinate synthetase, chloroplastic"/>
    <property type="match status" value="1"/>
</dbReference>
<dbReference type="Gene3D" id="3.40.440.10">
    <property type="entry name" value="Adenylosuccinate Synthetase, subunit A, domain 1"/>
    <property type="match status" value="1"/>
</dbReference>
<dbReference type="Gene3D" id="1.10.300.10">
    <property type="entry name" value="Adenylosuccinate Synthetase, subunit A, domain 2"/>
    <property type="match status" value="1"/>
</dbReference>
<dbReference type="Gene3D" id="3.90.170.10">
    <property type="entry name" value="Adenylosuccinate Synthetase, subunit A, domain 3"/>
    <property type="match status" value="1"/>
</dbReference>
<dbReference type="HAMAP" id="MF_00011">
    <property type="entry name" value="Adenylosucc_synth"/>
    <property type="match status" value="1"/>
</dbReference>
<dbReference type="InterPro" id="IPR018220">
    <property type="entry name" value="Adenylosuccin_syn_GTP-bd"/>
</dbReference>
<dbReference type="InterPro" id="IPR033128">
    <property type="entry name" value="Adenylosuccin_syn_Lys_AS"/>
</dbReference>
<dbReference type="InterPro" id="IPR042109">
    <property type="entry name" value="Adenylosuccinate_synth_dom1"/>
</dbReference>
<dbReference type="InterPro" id="IPR042110">
    <property type="entry name" value="Adenylosuccinate_synth_dom2"/>
</dbReference>
<dbReference type="InterPro" id="IPR042111">
    <property type="entry name" value="Adenylosuccinate_synth_dom3"/>
</dbReference>
<dbReference type="InterPro" id="IPR001114">
    <property type="entry name" value="Adenylosuccinate_synthetase"/>
</dbReference>
<dbReference type="InterPro" id="IPR027417">
    <property type="entry name" value="P-loop_NTPase"/>
</dbReference>
<dbReference type="NCBIfam" id="NF002223">
    <property type="entry name" value="PRK01117.1"/>
    <property type="match status" value="1"/>
</dbReference>
<dbReference type="NCBIfam" id="TIGR00184">
    <property type="entry name" value="purA"/>
    <property type="match status" value="1"/>
</dbReference>
<dbReference type="PANTHER" id="PTHR11846">
    <property type="entry name" value="ADENYLOSUCCINATE SYNTHETASE"/>
    <property type="match status" value="1"/>
</dbReference>
<dbReference type="PANTHER" id="PTHR11846:SF0">
    <property type="entry name" value="ADENYLOSUCCINATE SYNTHETASE"/>
    <property type="match status" value="1"/>
</dbReference>
<dbReference type="Pfam" id="PF00709">
    <property type="entry name" value="Adenylsucc_synt"/>
    <property type="match status" value="1"/>
</dbReference>
<dbReference type="SMART" id="SM00788">
    <property type="entry name" value="Adenylsucc_synt"/>
    <property type="match status" value="1"/>
</dbReference>
<dbReference type="SUPFAM" id="SSF52540">
    <property type="entry name" value="P-loop containing nucleoside triphosphate hydrolases"/>
    <property type="match status" value="1"/>
</dbReference>
<dbReference type="PROSITE" id="PS01266">
    <property type="entry name" value="ADENYLOSUCCIN_SYN_1"/>
    <property type="match status" value="1"/>
</dbReference>
<dbReference type="PROSITE" id="PS00513">
    <property type="entry name" value="ADENYLOSUCCIN_SYN_2"/>
    <property type="match status" value="1"/>
</dbReference>
<gene>
    <name type="ordered locus">CNBC2420</name>
</gene>
<accession>P0CQ35</accession>
<accession>Q55W95</accession>
<accession>Q5KK02</accession>
<comment type="function">
    <text evidence="1">Plays an important role in the de novo pathway and in the salvage pathway of purine nucleotide biosynthesis. Catalyzes the first committed step in the biosynthesis of AMP from IMP (By similarity).</text>
</comment>
<comment type="catalytic activity">
    <reaction evidence="2">
        <text>IMP + L-aspartate + GTP = N(6)-(1,2-dicarboxyethyl)-AMP + GDP + phosphate + 2 H(+)</text>
        <dbReference type="Rhea" id="RHEA:15753"/>
        <dbReference type="ChEBI" id="CHEBI:15378"/>
        <dbReference type="ChEBI" id="CHEBI:29991"/>
        <dbReference type="ChEBI" id="CHEBI:37565"/>
        <dbReference type="ChEBI" id="CHEBI:43474"/>
        <dbReference type="ChEBI" id="CHEBI:57567"/>
        <dbReference type="ChEBI" id="CHEBI:58053"/>
        <dbReference type="ChEBI" id="CHEBI:58189"/>
        <dbReference type="EC" id="6.3.4.4"/>
    </reaction>
</comment>
<comment type="cofactor">
    <cofactor evidence="2">
        <name>Mg(2+)</name>
        <dbReference type="ChEBI" id="CHEBI:18420"/>
    </cofactor>
    <text evidence="2">Binds 1 Mg(2+) ion per subunit.</text>
</comment>
<comment type="pathway">
    <text evidence="2">Purine metabolism; AMP biosynthesis via de novo pathway; AMP from IMP: step 1/2.</text>
</comment>
<comment type="subunit">
    <text evidence="2">Homodimer.</text>
</comment>
<comment type="subcellular location">
    <subcellularLocation>
        <location evidence="2">Cytoplasm</location>
    </subcellularLocation>
</comment>
<comment type="similarity">
    <text evidence="2">Belongs to the adenylosuccinate synthetase family.</text>
</comment>
<organism>
    <name type="scientific">Cryptococcus neoformans var. neoformans serotype D (strain B-3501A)</name>
    <name type="common">Filobasidiella neoformans</name>
    <dbReference type="NCBI Taxonomy" id="283643"/>
    <lineage>
        <taxon>Eukaryota</taxon>
        <taxon>Fungi</taxon>
        <taxon>Dikarya</taxon>
        <taxon>Basidiomycota</taxon>
        <taxon>Agaricomycotina</taxon>
        <taxon>Tremellomycetes</taxon>
        <taxon>Tremellales</taxon>
        <taxon>Cryptococcaceae</taxon>
        <taxon>Cryptococcus</taxon>
        <taxon>Cryptococcus neoformans species complex</taxon>
    </lineage>
</organism>